<proteinExistence type="inferred from homology"/>
<evidence type="ECO:0000255" key="1">
    <source>
        <dbReference type="HAMAP-Rule" id="MF_00227"/>
    </source>
</evidence>
<comment type="function">
    <text evidence="1">RNaseP catalyzes the removal of the 5'-leader sequence from pre-tRNA to produce the mature 5'-terminus. It can also cleave other RNA substrates such as 4.5S RNA. The protein component plays an auxiliary but essential role in vivo by binding to the 5'-leader sequence and broadening the substrate specificity of the ribozyme.</text>
</comment>
<comment type="catalytic activity">
    <reaction evidence="1">
        <text>Endonucleolytic cleavage of RNA, removing 5'-extranucleotides from tRNA precursor.</text>
        <dbReference type="EC" id="3.1.26.5"/>
    </reaction>
</comment>
<comment type="subunit">
    <text evidence="1">Consists of a catalytic RNA component (M1 or rnpB) and a protein subunit.</text>
</comment>
<comment type="similarity">
    <text evidence="1">Belongs to the RnpA family.</text>
</comment>
<organism>
    <name type="scientific">Synechococcus sp. (strain JA-2-3B'a(2-13))</name>
    <name type="common">Cyanobacteria bacterium Yellowstone B-Prime</name>
    <dbReference type="NCBI Taxonomy" id="321332"/>
    <lineage>
        <taxon>Bacteria</taxon>
        <taxon>Bacillati</taxon>
        <taxon>Cyanobacteriota</taxon>
        <taxon>Cyanophyceae</taxon>
        <taxon>Synechococcales</taxon>
        <taxon>Synechococcaceae</taxon>
        <taxon>Synechococcus</taxon>
    </lineage>
</organism>
<gene>
    <name evidence="1" type="primary">rnpA</name>
    <name type="ordered locus">CYB_2941</name>
</gene>
<sequence>MLPAPHRLRDRRAFQALYQGGQRRSGAGLTLLFQPMPAGCEGIPSQVGLVIGRKVSKSAVKRNRLRRQLREILRPLCPNLKPGYRLLFISKANLLTYRWPELRAEVHRLLQKADLLVSTDVDSTGADSDAKPS</sequence>
<keyword id="KW-0255">Endonuclease</keyword>
<keyword id="KW-0378">Hydrolase</keyword>
<keyword id="KW-0540">Nuclease</keyword>
<keyword id="KW-1185">Reference proteome</keyword>
<keyword id="KW-0694">RNA-binding</keyword>
<keyword id="KW-0819">tRNA processing</keyword>
<protein>
    <recommendedName>
        <fullName evidence="1">Ribonuclease P protein component</fullName>
        <shortName evidence="1">RNase P protein</shortName>
        <shortName evidence="1">RNaseP protein</shortName>
        <ecNumber evidence="1">3.1.26.5</ecNumber>
    </recommendedName>
    <alternativeName>
        <fullName evidence="1">Protein C5</fullName>
    </alternativeName>
</protein>
<dbReference type="EC" id="3.1.26.5" evidence="1"/>
<dbReference type="EMBL" id="CP000240">
    <property type="protein sequence ID" value="ABD03860.1"/>
    <property type="molecule type" value="Genomic_DNA"/>
</dbReference>
<dbReference type="RefSeq" id="WP_011434476.1">
    <property type="nucleotide sequence ID" value="NC_007776.1"/>
</dbReference>
<dbReference type="SMR" id="Q2JHS3"/>
<dbReference type="STRING" id="321332.CYB_2941"/>
<dbReference type="KEGG" id="cyb:CYB_2941"/>
<dbReference type="eggNOG" id="COG0594">
    <property type="taxonomic scope" value="Bacteria"/>
</dbReference>
<dbReference type="HOGENOM" id="CLU_117179_9_0_3"/>
<dbReference type="OrthoDB" id="540358at2"/>
<dbReference type="Proteomes" id="UP000001938">
    <property type="component" value="Chromosome"/>
</dbReference>
<dbReference type="GO" id="GO:0030677">
    <property type="term" value="C:ribonuclease P complex"/>
    <property type="evidence" value="ECO:0007669"/>
    <property type="project" value="TreeGrafter"/>
</dbReference>
<dbReference type="GO" id="GO:0042781">
    <property type="term" value="F:3'-tRNA processing endoribonuclease activity"/>
    <property type="evidence" value="ECO:0007669"/>
    <property type="project" value="TreeGrafter"/>
</dbReference>
<dbReference type="GO" id="GO:0004526">
    <property type="term" value="F:ribonuclease P activity"/>
    <property type="evidence" value="ECO:0007669"/>
    <property type="project" value="UniProtKB-UniRule"/>
</dbReference>
<dbReference type="GO" id="GO:0000049">
    <property type="term" value="F:tRNA binding"/>
    <property type="evidence" value="ECO:0007669"/>
    <property type="project" value="UniProtKB-UniRule"/>
</dbReference>
<dbReference type="GO" id="GO:0001682">
    <property type="term" value="P:tRNA 5'-leader removal"/>
    <property type="evidence" value="ECO:0007669"/>
    <property type="project" value="UniProtKB-UniRule"/>
</dbReference>
<dbReference type="Gene3D" id="3.30.230.10">
    <property type="match status" value="1"/>
</dbReference>
<dbReference type="HAMAP" id="MF_00227">
    <property type="entry name" value="RNase_P"/>
    <property type="match status" value="1"/>
</dbReference>
<dbReference type="InterPro" id="IPR020568">
    <property type="entry name" value="Ribosomal_Su5_D2-typ_SF"/>
</dbReference>
<dbReference type="InterPro" id="IPR014721">
    <property type="entry name" value="Ribsml_uS5_D2-typ_fold_subgr"/>
</dbReference>
<dbReference type="InterPro" id="IPR000100">
    <property type="entry name" value="RNase_P"/>
</dbReference>
<dbReference type="InterPro" id="IPR020539">
    <property type="entry name" value="RNase_P_CS"/>
</dbReference>
<dbReference type="NCBIfam" id="TIGR00188">
    <property type="entry name" value="rnpA"/>
    <property type="match status" value="1"/>
</dbReference>
<dbReference type="PANTHER" id="PTHR33992">
    <property type="entry name" value="RIBONUCLEASE P PROTEIN COMPONENT"/>
    <property type="match status" value="1"/>
</dbReference>
<dbReference type="PANTHER" id="PTHR33992:SF1">
    <property type="entry name" value="RIBONUCLEASE P PROTEIN COMPONENT"/>
    <property type="match status" value="1"/>
</dbReference>
<dbReference type="Pfam" id="PF00825">
    <property type="entry name" value="Ribonuclease_P"/>
    <property type="match status" value="1"/>
</dbReference>
<dbReference type="SUPFAM" id="SSF54211">
    <property type="entry name" value="Ribosomal protein S5 domain 2-like"/>
    <property type="match status" value="1"/>
</dbReference>
<dbReference type="PROSITE" id="PS00648">
    <property type="entry name" value="RIBONUCLEASE_P"/>
    <property type="match status" value="1"/>
</dbReference>
<reference key="1">
    <citation type="journal article" date="2007" name="ISME J.">
        <title>Population level functional diversity in a microbial community revealed by comparative genomic and metagenomic analyses.</title>
        <authorList>
            <person name="Bhaya D."/>
            <person name="Grossman A.R."/>
            <person name="Steunou A.-S."/>
            <person name="Khuri N."/>
            <person name="Cohan F.M."/>
            <person name="Hamamura N."/>
            <person name="Melendrez M.C."/>
            <person name="Bateson M.M."/>
            <person name="Ward D.M."/>
            <person name="Heidelberg J.F."/>
        </authorList>
    </citation>
    <scope>NUCLEOTIDE SEQUENCE [LARGE SCALE GENOMIC DNA]</scope>
    <source>
        <strain>JA-2-3B'a(2-13)</strain>
    </source>
</reference>
<name>RNPA_SYNJB</name>
<accession>Q2JHS3</accession>
<feature type="chain" id="PRO_1000204357" description="Ribonuclease P protein component">
    <location>
        <begin position="1"/>
        <end position="133"/>
    </location>
</feature>